<comment type="function">
    <text evidence="1">Could be involved in insertion of integral membrane proteins into the membrane.</text>
</comment>
<comment type="subcellular location">
    <subcellularLocation>
        <location evidence="1">Cell inner membrane</location>
        <topology evidence="1">Peripheral membrane protein</topology>
        <orientation evidence="1">Cytoplasmic side</orientation>
    </subcellularLocation>
</comment>
<comment type="similarity">
    <text evidence="1">Belongs to the UPF0161 family.</text>
</comment>
<organism>
    <name type="scientific">Bartonella tribocorum (strain CIP 105476 / IBS 506)</name>
    <dbReference type="NCBI Taxonomy" id="382640"/>
    <lineage>
        <taxon>Bacteria</taxon>
        <taxon>Pseudomonadati</taxon>
        <taxon>Pseudomonadota</taxon>
        <taxon>Alphaproteobacteria</taxon>
        <taxon>Hyphomicrobiales</taxon>
        <taxon>Bartonellaceae</taxon>
        <taxon>Bartonella</taxon>
    </lineage>
</organism>
<protein>
    <recommendedName>
        <fullName evidence="1">Putative membrane protein insertion efficiency factor</fullName>
    </recommendedName>
</protein>
<reference key="1">
    <citation type="journal article" date="2007" name="Nat. Genet.">
        <title>Genomic analysis of Bartonella identifies type IV secretion systems as host adaptability factors.</title>
        <authorList>
            <person name="Saenz H.L."/>
            <person name="Engel P."/>
            <person name="Stoeckli M.C."/>
            <person name="Lanz C."/>
            <person name="Raddatz G."/>
            <person name="Vayssier-Taussat M."/>
            <person name="Birtles R."/>
            <person name="Schuster S.C."/>
            <person name="Dehio C."/>
        </authorList>
    </citation>
    <scope>NUCLEOTIDE SEQUENCE [LARGE SCALE GENOMIC DNA]</scope>
    <source>
        <strain>CIP 105476 / IBS 506</strain>
    </source>
</reference>
<name>YIDD_BART1</name>
<proteinExistence type="inferred from homology"/>
<feature type="chain" id="PRO_1000080180" description="Putative membrane protein insertion efficiency factor">
    <location>
        <begin position="1"/>
        <end position="116"/>
    </location>
</feature>
<gene>
    <name type="ordered locus">BT_1305</name>
</gene>
<evidence type="ECO:0000255" key="1">
    <source>
        <dbReference type="HAMAP-Rule" id="MF_00386"/>
    </source>
</evidence>
<dbReference type="EMBL" id="AM260525">
    <property type="protein sequence ID" value="CAK01669.1"/>
    <property type="molecule type" value="Genomic_DNA"/>
</dbReference>
<dbReference type="KEGG" id="btr:BT_1305"/>
<dbReference type="eggNOG" id="COG0759">
    <property type="taxonomic scope" value="Bacteria"/>
</dbReference>
<dbReference type="HOGENOM" id="CLU_144811_0_1_5"/>
<dbReference type="Proteomes" id="UP000001592">
    <property type="component" value="Chromosome"/>
</dbReference>
<dbReference type="GO" id="GO:0005886">
    <property type="term" value="C:plasma membrane"/>
    <property type="evidence" value="ECO:0007669"/>
    <property type="project" value="UniProtKB-SubCell"/>
</dbReference>
<dbReference type="HAMAP" id="MF_00386">
    <property type="entry name" value="UPF0161_YidD"/>
    <property type="match status" value="1"/>
</dbReference>
<dbReference type="InterPro" id="IPR002696">
    <property type="entry name" value="Membr_insert_effic_factor_YidD"/>
</dbReference>
<dbReference type="NCBIfam" id="TIGR00278">
    <property type="entry name" value="membrane protein insertion efficiency factor YidD"/>
    <property type="match status" value="1"/>
</dbReference>
<dbReference type="PANTHER" id="PTHR33383">
    <property type="entry name" value="MEMBRANE PROTEIN INSERTION EFFICIENCY FACTOR-RELATED"/>
    <property type="match status" value="1"/>
</dbReference>
<dbReference type="PANTHER" id="PTHR33383:SF1">
    <property type="entry name" value="MEMBRANE PROTEIN INSERTION EFFICIENCY FACTOR-RELATED"/>
    <property type="match status" value="1"/>
</dbReference>
<dbReference type="Pfam" id="PF01809">
    <property type="entry name" value="YidD"/>
    <property type="match status" value="1"/>
</dbReference>
<dbReference type="SMART" id="SM01234">
    <property type="entry name" value="Haemolytic"/>
    <property type="match status" value="1"/>
</dbReference>
<sequence length="116" mass="13510">MLKSQFQQKKMTRNYTGAWQKTPGRLLGIFLIRFYQITLSSLIGNQCRHAPTCSEYIYEAIARHGLWAGAWMGLFRIMRCGPFGTDGFDPVPPSLGHSCCFYKPWRYWKISDKHNK</sequence>
<keyword id="KW-0997">Cell inner membrane</keyword>
<keyword id="KW-1003">Cell membrane</keyword>
<keyword id="KW-0472">Membrane</keyword>
<accession>A9IVA8</accession>